<dbReference type="EC" id="2.1.1.191" evidence="1"/>
<dbReference type="EMBL" id="CP000970">
    <property type="protein sequence ID" value="ACB16334.1"/>
    <property type="molecule type" value="Genomic_DNA"/>
</dbReference>
<dbReference type="RefSeq" id="WP_000116270.1">
    <property type="nucleotide sequence ID" value="NC_010498.1"/>
</dbReference>
<dbReference type="SMR" id="B1LJ30"/>
<dbReference type="KEGG" id="ecm:EcSMS35_2151"/>
<dbReference type="HOGENOM" id="CLU_014042_0_0_6"/>
<dbReference type="Proteomes" id="UP000007011">
    <property type="component" value="Chromosome"/>
</dbReference>
<dbReference type="GO" id="GO:0005737">
    <property type="term" value="C:cytoplasm"/>
    <property type="evidence" value="ECO:0007669"/>
    <property type="project" value="UniProtKB-SubCell"/>
</dbReference>
<dbReference type="GO" id="GO:0003723">
    <property type="term" value="F:RNA binding"/>
    <property type="evidence" value="ECO:0007669"/>
    <property type="project" value="UniProtKB-KW"/>
</dbReference>
<dbReference type="GO" id="GO:0016434">
    <property type="term" value="F:rRNA (cytosine) methyltransferase activity"/>
    <property type="evidence" value="ECO:0007669"/>
    <property type="project" value="UniProtKB-UniRule"/>
</dbReference>
<dbReference type="CDD" id="cd02440">
    <property type="entry name" value="AdoMet_MTases"/>
    <property type="match status" value="1"/>
</dbReference>
<dbReference type="CDD" id="cd21153">
    <property type="entry name" value="PUA_RlmI"/>
    <property type="match status" value="1"/>
</dbReference>
<dbReference type="CDD" id="cd11572">
    <property type="entry name" value="RlmI_M_like"/>
    <property type="match status" value="1"/>
</dbReference>
<dbReference type="FunFam" id="2.30.130.10:FF:000005">
    <property type="entry name" value="Ribosomal RNA large subunit methyltransferase I"/>
    <property type="match status" value="1"/>
</dbReference>
<dbReference type="FunFam" id="3.30.750.80:FF:000002">
    <property type="entry name" value="Ribosomal RNA large subunit methyltransferase I"/>
    <property type="match status" value="1"/>
</dbReference>
<dbReference type="FunFam" id="3.40.50.150:FF:000044">
    <property type="entry name" value="Ribosomal RNA large subunit methyltransferase I"/>
    <property type="match status" value="1"/>
</dbReference>
<dbReference type="Gene3D" id="2.30.130.10">
    <property type="entry name" value="PUA domain"/>
    <property type="match status" value="1"/>
</dbReference>
<dbReference type="Gene3D" id="3.30.750.80">
    <property type="entry name" value="RNA methyltransferase domain (HRMD) like"/>
    <property type="match status" value="1"/>
</dbReference>
<dbReference type="Gene3D" id="3.40.50.150">
    <property type="entry name" value="Vaccinia Virus protein VP39"/>
    <property type="match status" value="1"/>
</dbReference>
<dbReference type="HAMAP" id="MF_01857">
    <property type="entry name" value="23SrRNA_methyltr_I"/>
    <property type="match status" value="1"/>
</dbReference>
<dbReference type="InterPro" id="IPR002478">
    <property type="entry name" value="PUA"/>
</dbReference>
<dbReference type="InterPro" id="IPR015947">
    <property type="entry name" value="PUA-like_sf"/>
</dbReference>
<dbReference type="InterPro" id="IPR036974">
    <property type="entry name" value="PUA_sf"/>
</dbReference>
<dbReference type="InterPro" id="IPR023542">
    <property type="entry name" value="RLMI"/>
</dbReference>
<dbReference type="InterPro" id="IPR041532">
    <property type="entry name" value="RlmI-like_PUA"/>
</dbReference>
<dbReference type="InterPro" id="IPR019614">
    <property type="entry name" value="SAM-dep_methyl-trfase"/>
</dbReference>
<dbReference type="InterPro" id="IPR029063">
    <property type="entry name" value="SAM-dependent_MTases_sf"/>
</dbReference>
<dbReference type="NCBIfam" id="NF011707">
    <property type="entry name" value="PRK15128.1"/>
    <property type="match status" value="1"/>
</dbReference>
<dbReference type="PANTHER" id="PTHR42873">
    <property type="entry name" value="RIBOSOMAL RNA LARGE SUBUNIT METHYLTRANSFERASE"/>
    <property type="match status" value="1"/>
</dbReference>
<dbReference type="PANTHER" id="PTHR42873:SF1">
    <property type="entry name" value="S-ADENOSYLMETHIONINE-DEPENDENT METHYLTRANSFERASE DOMAIN-CONTAINING PROTEIN"/>
    <property type="match status" value="1"/>
</dbReference>
<dbReference type="Pfam" id="PF10672">
    <property type="entry name" value="Methyltrans_SAM"/>
    <property type="match status" value="1"/>
</dbReference>
<dbReference type="Pfam" id="PF17785">
    <property type="entry name" value="PUA_3"/>
    <property type="match status" value="1"/>
</dbReference>
<dbReference type="SMART" id="SM00359">
    <property type="entry name" value="PUA"/>
    <property type="match status" value="1"/>
</dbReference>
<dbReference type="SUPFAM" id="SSF88697">
    <property type="entry name" value="PUA domain-like"/>
    <property type="match status" value="1"/>
</dbReference>
<dbReference type="SUPFAM" id="SSF53335">
    <property type="entry name" value="S-adenosyl-L-methionine-dependent methyltransferases"/>
    <property type="match status" value="1"/>
</dbReference>
<dbReference type="PROSITE" id="PS50890">
    <property type="entry name" value="PUA"/>
    <property type="match status" value="1"/>
</dbReference>
<sequence>MSVRLVLAKGREKSLLRRHPWIFSGAVARMEGKASLGETIDIVDHQGKWLARGAYSPASQIRARVWTFDPSESIDIAFFTRRLQQAQKWRDWLAQKDGLNSYRLIAGESDGLPGITIDRFGNFLVLQLLSAGAEYQRAALISALQTLYPECAIYDRSDVAVRKKEGMELTQGPVTGELPPALLPIEEHGMKLLVDIQHGHKTGYYLDQRDSRLATRRYVENKRVLNCFSYTGGFAVSALMGGCSQVVSVDTSQEALDIARQNVELNKLDLSKAEFVRDDVFKLLRTYRDRGEKFDVIVMDPPKFVENKSQLMGACRGYKDINMLAIQLLNEGGVLLTFSCSGLMTSDLFQKIIADAAIDAGRDVQFIEQFRQAADHPVIATYPEGLYLKGFACRVM</sequence>
<keyword id="KW-0963">Cytoplasm</keyword>
<keyword id="KW-0489">Methyltransferase</keyword>
<keyword id="KW-0694">RNA-binding</keyword>
<keyword id="KW-0698">rRNA processing</keyword>
<keyword id="KW-0949">S-adenosyl-L-methionine</keyword>
<keyword id="KW-0808">Transferase</keyword>
<accession>B1LJ30</accession>
<evidence type="ECO:0000255" key="1">
    <source>
        <dbReference type="HAMAP-Rule" id="MF_01857"/>
    </source>
</evidence>
<name>RLMI_ECOSM</name>
<protein>
    <recommendedName>
        <fullName evidence="1">Ribosomal RNA large subunit methyltransferase I</fullName>
        <ecNumber evidence="1">2.1.1.191</ecNumber>
    </recommendedName>
    <alternativeName>
        <fullName evidence="1">23S rRNA m5C1962 methyltransferase</fullName>
    </alternativeName>
    <alternativeName>
        <fullName evidence="1">rRNA (cytosine-C(5)-)-methyltransferase RlmI</fullName>
    </alternativeName>
</protein>
<organism>
    <name type="scientific">Escherichia coli (strain SMS-3-5 / SECEC)</name>
    <dbReference type="NCBI Taxonomy" id="439855"/>
    <lineage>
        <taxon>Bacteria</taxon>
        <taxon>Pseudomonadati</taxon>
        <taxon>Pseudomonadota</taxon>
        <taxon>Gammaproteobacteria</taxon>
        <taxon>Enterobacterales</taxon>
        <taxon>Enterobacteriaceae</taxon>
        <taxon>Escherichia</taxon>
    </lineage>
</organism>
<proteinExistence type="inferred from homology"/>
<feature type="chain" id="PRO_0000366225" description="Ribosomal RNA large subunit methyltransferase I">
    <location>
        <begin position="1"/>
        <end position="396"/>
    </location>
</feature>
<feature type="domain" description="PUA" evidence="1">
    <location>
        <begin position="2"/>
        <end position="81"/>
    </location>
</feature>
<comment type="function">
    <text evidence="1">Specifically methylates the cytosine at position 1962 (m5C1962) of 23S rRNA.</text>
</comment>
<comment type="catalytic activity">
    <reaction evidence="1">
        <text>cytidine(1962) in 23S rRNA + S-adenosyl-L-methionine = 5-methylcytidine(1962) in 23S rRNA + S-adenosyl-L-homocysteine + H(+)</text>
        <dbReference type="Rhea" id="RHEA:42912"/>
        <dbReference type="Rhea" id="RHEA-COMP:10382"/>
        <dbReference type="Rhea" id="RHEA-COMP:10386"/>
        <dbReference type="ChEBI" id="CHEBI:15378"/>
        <dbReference type="ChEBI" id="CHEBI:57856"/>
        <dbReference type="ChEBI" id="CHEBI:59789"/>
        <dbReference type="ChEBI" id="CHEBI:74483"/>
        <dbReference type="ChEBI" id="CHEBI:82748"/>
        <dbReference type="EC" id="2.1.1.191"/>
    </reaction>
</comment>
<comment type="subcellular location">
    <subcellularLocation>
        <location evidence="1">Cytoplasm</location>
    </subcellularLocation>
</comment>
<comment type="similarity">
    <text evidence="1">Belongs to the methyltransferase superfamily. RlmI family.</text>
</comment>
<reference key="1">
    <citation type="journal article" date="2008" name="J. Bacteriol.">
        <title>Insights into the environmental resistance gene pool from the genome sequence of the multidrug-resistant environmental isolate Escherichia coli SMS-3-5.</title>
        <authorList>
            <person name="Fricke W.F."/>
            <person name="Wright M.S."/>
            <person name="Lindell A.H."/>
            <person name="Harkins D.M."/>
            <person name="Baker-Austin C."/>
            <person name="Ravel J."/>
            <person name="Stepanauskas R."/>
        </authorList>
    </citation>
    <scope>NUCLEOTIDE SEQUENCE [LARGE SCALE GENOMIC DNA]</scope>
    <source>
        <strain>SMS-3-5 / SECEC</strain>
    </source>
</reference>
<gene>
    <name evidence="1" type="primary">rlmI</name>
    <name type="ordered locus">EcSMS35_2151</name>
</gene>